<gene>
    <name type="primary">klhl20</name>
</gene>
<keyword id="KW-0963">Cytoplasm</keyword>
<keyword id="KW-0880">Kelch repeat</keyword>
<keyword id="KW-0539">Nucleus</keyword>
<keyword id="KW-0653">Protein transport</keyword>
<keyword id="KW-1185">Reference proteome</keyword>
<keyword id="KW-0677">Repeat</keyword>
<keyword id="KW-0813">Transport</keyword>
<keyword id="KW-0833">Ubl conjugation pathway</keyword>
<accession>Q6DFF6</accession>
<name>KLH20_XENLA</name>
<proteinExistence type="evidence at transcript level"/>
<dbReference type="EMBL" id="BC076782">
    <property type="protein sequence ID" value="AAH76782.1"/>
    <property type="molecule type" value="mRNA"/>
</dbReference>
<dbReference type="RefSeq" id="NP_001086544.1">
    <property type="nucleotide sequence ID" value="NM_001093075.1"/>
</dbReference>
<dbReference type="RefSeq" id="XP_018112263.1">
    <property type="nucleotide sequence ID" value="XM_018256774.1"/>
</dbReference>
<dbReference type="SMR" id="Q6DFF6"/>
<dbReference type="DNASU" id="446379"/>
<dbReference type="GeneID" id="446379"/>
<dbReference type="KEGG" id="xla:446379"/>
<dbReference type="AGR" id="Xenbase:XB-GENE-960639"/>
<dbReference type="CTD" id="446379"/>
<dbReference type="Xenbase" id="XB-GENE-960639">
    <property type="gene designation" value="klhl20.L"/>
</dbReference>
<dbReference type="OMA" id="CAVFNNL"/>
<dbReference type="OrthoDB" id="45365at2759"/>
<dbReference type="UniPathway" id="UPA00143"/>
<dbReference type="Proteomes" id="UP000186698">
    <property type="component" value="Chromosome 4L"/>
</dbReference>
<dbReference type="Bgee" id="446379">
    <property type="expression patterns" value="Expressed in blastula and 19 other cell types or tissues"/>
</dbReference>
<dbReference type="GO" id="GO:0031463">
    <property type="term" value="C:Cul3-RING ubiquitin ligase complex"/>
    <property type="evidence" value="ECO:0000250"/>
    <property type="project" value="UniProtKB"/>
</dbReference>
<dbReference type="GO" id="GO:0005737">
    <property type="term" value="C:cytoplasm"/>
    <property type="evidence" value="ECO:0000250"/>
    <property type="project" value="UniProtKB"/>
</dbReference>
<dbReference type="GO" id="GO:0005829">
    <property type="term" value="C:cytosol"/>
    <property type="evidence" value="ECO:0007669"/>
    <property type="project" value="GOC"/>
</dbReference>
<dbReference type="GO" id="GO:0048471">
    <property type="term" value="C:perinuclear region of cytoplasm"/>
    <property type="evidence" value="ECO:0007669"/>
    <property type="project" value="UniProtKB-SubCell"/>
</dbReference>
<dbReference type="GO" id="GO:0016605">
    <property type="term" value="C:PML body"/>
    <property type="evidence" value="ECO:0000250"/>
    <property type="project" value="UniProtKB"/>
</dbReference>
<dbReference type="GO" id="GO:0005802">
    <property type="term" value="C:trans-Golgi network"/>
    <property type="evidence" value="ECO:0000250"/>
    <property type="project" value="UniProtKB"/>
</dbReference>
<dbReference type="GO" id="GO:0019964">
    <property type="term" value="F:type II interferon binding"/>
    <property type="evidence" value="ECO:0000250"/>
    <property type="project" value="UniProtKB"/>
</dbReference>
<dbReference type="GO" id="GO:1990756">
    <property type="term" value="F:ubiquitin-like ligase-substrate adaptor activity"/>
    <property type="evidence" value="ECO:0000318"/>
    <property type="project" value="GO_Central"/>
</dbReference>
<dbReference type="GO" id="GO:0006895">
    <property type="term" value="P:Golgi to endosome transport"/>
    <property type="evidence" value="ECO:0000250"/>
    <property type="project" value="UniProtKB"/>
</dbReference>
<dbReference type="GO" id="GO:0043066">
    <property type="term" value="P:negative regulation of apoptotic process"/>
    <property type="evidence" value="ECO:0000250"/>
    <property type="project" value="UniProtKB"/>
</dbReference>
<dbReference type="GO" id="GO:0043161">
    <property type="term" value="P:proteasome-mediated ubiquitin-dependent protein catabolic process"/>
    <property type="evidence" value="ECO:0000250"/>
    <property type="project" value="UniProtKB"/>
</dbReference>
<dbReference type="GO" id="GO:1990390">
    <property type="term" value="P:protein K33-linked ubiquitination"/>
    <property type="evidence" value="ECO:0000250"/>
    <property type="project" value="UniProtKB"/>
</dbReference>
<dbReference type="GO" id="GO:0015031">
    <property type="term" value="P:protein transport"/>
    <property type="evidence" value="ECO:0007669"/>
    <property type="project" value="UniProtKB-KW"/>
</dbReference>
<dbReference type="GO" id="GO:0016567">
    <property type="term" value="P:protein ubiquitination"/>
    <property type="evidence" value="ECO:0000250"/>
    <property type="project" value="UniProtKB"/>
</dbReference>
<dbReference type="CDD" id="cd18459">
    <property type="entry name" value="BACK_KLHL20"/>
    <property type="match status" value="1"/>
</dbReference>
<dbReference type="CDD" id="cd18249">
    <property type="entry name" value="BTB_POZ_KLHL20_KLEIP"/>
    <property type="match status" value="1"/>
</dbReference>
<dbReference type="FunFam" id="1.25.40.420:FF:000001">
    <property type="entry name" value="Kelch-like family member 12"/>
    <property type="match status" value="1"/>
</dbReference>
<dbReference type="FunFam" id="2.120.10.80:FF:000006">
    <property type="entry name" value="Kelch-like family member 20"/>
    <property type="match status" value="1"/>
</dbReference>
<dbReference type="FunFam" id="3.30.710.10:FF:000001">
    <property type="entry name" value="Kelch-like family member 20"/>
    <property type="match status" value="1"/>
</dbReference>
<dbReference type="Gene3D" id="1.25.40.420">
    <property type="match status" value="1"/>
</dbReference>
<dbReference type="Gene3D" id="2.120.10.80">
    <property type="entry name" value="Kelch-type beta propeller"/>
    <property type="match status" value="1"/>
</dbReference>
<dbReference type="Gene3D" id="3.30.710.10">
    <property type="entry name" value="Potassium Channel Kv1.1, Chain A"/>
    <property type="match status" value="1"/>
</dbReference>
<dbReference type="InterPro" id="IPR011705">
    <property type="entry name" value="BACK"/>
</dbReference>
<dbReference type="InterPro" id="IPR017096">
    <property type="entry name" value="BTB-kelch_protein"/>
</dbReference>
<dbReference type="InterPro" id="IPR000210">
    <property type="entry name" value="BTB/POZ_dom"/>
</dbReference>
<dbReference type="InterPro" id="IPR011043">
    <property type="entry name" value="Gal_Oxase/kelch_b-propeller"/>
</dbReference>
<dbReference type="InterPro" id="IPR015915">
    <property type="entry name" value="Kelch-typ_b-propeller"/>
</dbReference>
<dbReference type="InterPro" id="IPR006652">
    <property type="entry name" value="Kelch_1"/>
</dbReference>
<dbReference type="InterPro" id="IPR011333">
    <property type="entry name" value="SKP1/BTB/POZ_sf"/>
</dbReference>
<dbReference type="PANTHER" id="PTHR24412">
    <property type="entry name" value="KELCH PROTEIN"/>
    <property type="match status" value="1"/>
</dbReference>
<dbReference type="PANTHER" id="PTHR24412:SF451">
    <property type="entry name" value="KELCH-LIKE PROTEIN 20"/>
    <property type="match status" value="1"/>
</dbReference>
<dbReference type="Pfam" id="PF07707">
    <property type="entry name" value="BACK"/>
    <property type="match status" value="1"/>
</dbReference>
<dbReference type="Pfam" id="PF00651">
    <property type="entry name" value="BTB"/>
    <property type="match status" value="1"/>
</dbReference>
<dbReference type="Pfam" id="PF01344">
    <property type="entry name" value="Kelch_1"/>
    <property type="match status" value="2"/>
</dbReference>
<dbReference type="Pfam" id="PF24681">
    <property type="entry name" value="Kelch_KLHDC2_KLHL20_DRC7"/>
    <property type="match status" value="1"/>
</dbReference>
<dbReference type="PIRSF" id="PIRSF037037">
    <property type="entry name" value="Kelch-like_protein_gigaxonin"/>
    <property type="match status" value="1"/>
</dbReference>
<dbReference type="PRINTS" id="PR00501">
    <property type="entry name" value="KELCHREPEAT"/>
</dbReference>
<dbReference type="SMART" id="SM00875">
    <property type="entry name" value="BACK"/>
    <property type="match status" value="1"/>
</dbReference>
<dbReference type="SMART" id="SM00225">
    <property type="entry name" value="BTB"/>
    <property type="match status" value="1"/>
</dbReference>
<dbReference type="SMART" id="SM00612">
    <property type="entry name" value="Kelch"/>
    <property type="match status" value="6"/>
</dbReference>
<dbReference type="SUPFAM" id="SSF50965">
    <property type="entry name" value="Galactose oxidase, central domain"/>
    <property type="match status" value="1"/>
</dbReference>
<dbReference type="SUPFAM" id="SSF54695">
    <property type="entry name" value="POZ domain"/>
    <property type="match status" value="1"/>
</dbReference>
<dbReference type="PROSITE" id="PS50097">
    <property type="entry name" value="BTB"/>
    <property type="match status" value="1"/>
</dbReference>
<sequence>MRRCLNTRPGETGMDVTSRCTLGDPNKLPEGVPQPARMPYVSDKHPRQTLEVINLLRKHRELCDVVLVVGAKKIYAHRVILSACSPYFRAMFTGELAESRQTEVVIRDIDERAMELLIDFSYTSQITVEEGNVQTLLPAACLLQLAEIQEACCEFLKRQLDPSNCLGIRAFADTHSCRELLRIADKFTQHNFQEVMESEEFMLLPANQLIDIISSDELNVRSEEQVFNAVMAWVKYSIQERRPQLPQVLQHVRLPLLSPKFLVGTVGSDPLIKSDEECRDLVDEAKNYLLLPQERPLMQGPRTRPRKPIRCGEVLFAVGGWCSGDAISSVERYDPQTNEWRMVASMSKRRCGVGVSVLDDLLYAVGGHDGSSYLNSVERYDPKTNQWSSDVAPTSTCRTSVGVAVLGGYLYAVGGQDGVSCLNIVERYDPKENKWTRVASMSTRRLGVAVAVLGGFLYAVGGSDGTSPLNTVERYNPQENRWHTIAPMGTRRKHLGCAVYQDMIYAVGGRDDTTELSSAERYNPRTNQWSPVVAMTSRRSGVGLAVVNGQLMAVGGFDGTTYLKTIEVFDPDANTWRLYGGMNYRRLGGGVGVIKMTHCESHIW</sequence>
<reference key="1">
    <citation type="submission" date="2004-07" db="EMBL/GenBank/DDBJ databases">
        <authorList>
            <consortium name="NIH - Xenopus Gene Collection (XGC) project"/>
        </authorList>
    </citation>
    <scope>NUCLEOTIDE SEQUENCE [LARGE SCALE MRNA]</scope>
    <source>
        <tissue>Oocyte</tissue>
    </source>
</reference>
<evidence type="ECO:0000250" key="1"/>
<evidence type="ECO:0000255" key="2">
    <source>
        <dbReference type="PROSITE-ProRule" id="PRU00037"/>
    </source>
</evidence>
<feature type="chain" id="PRO_0000396630" description="Kelch-like protein 20">
    <location>
        <begin position="1"/>
        <end position="604"/>
    </location>
</feature>
<feature type="domain" description="BTB" evidence="2">
    <location>
        <begin position="63"/>
        <end position="130"/>
    </location>
</feature>
<feature type="domain" description="BACK">
    <location>
        <begin position="165"/>
        <end position="267"/>
    </location>
</feature>
<feature type="repeat" description="Kelch 1">
    <location>
        <begin position="314"/>
        <end position="360"/>
    </location>
</feature>
<feature type="repeat" description="Kelch 2">
    <location>
        <begin position="362"/>
        <end position="408"/>
    </location>
</feature>
<feature type="repeat" description="Kelch 3">
    <location>
        <begin position="409"/>
        <end position="455"/>
    </location>
</feature>
<feature type="repeat" description="Kelch 4">
    <location>
        <begin position="457"/>
        <end position="502"/>
    </location>
</feature>
<feature type="repeat" description="Kelch 5">
    <location>
        <begin position="504"/>
        <end position="549"/>
    </location>
</feature>
<feature type="repeat" description="Kelch 6">
    <location>
        <begin position="551"/>
        <end position="596"/>
    </location>
</feature>
<organism>
    <name type="scientific">Xenopus laevis</name>
    <name type="common">African clawed frog</name>
    <dbReference type="NCBI Taxonomy" id="8355"/>
    <lineage>
        <taxon>Eukaryota</taxon>
        <taxon>Metazoa</taxon>
        <taxon>Chordata</taxon>
        <taxon>Craniata</taxon>
        <taxon>Vertebrata</taxon>
        <taxon>Euteleostomi</taxon>
        <taxon>Amphibia</taxon>
        <taxon>Batrachia</taxon>
        <taxon>Anura</taxon>
        <taxon>Pipoidea</taxon>
        <taxon>Pipidae</taxon>
        <taxon>Xenopodinae</taxon>
        <taxon>Xenopus</taxon>
        <taxon>Xenopus</taxon>
    </lineage>
</organism>
<comment type="function">
    <text evidence="1">Substrate-specific adapter of a BCR (BTB-CUL3-RBX1) E3 ubiquitin-protein ligase complex involved in interferon response and anterograde Golgi to endosome transport. The BCR(KLHL20) E3 ubiquitin ligase complex mediates the ubiquitination of target proteins, leading to their degradation by the proteasome. It also specifically mediates 'Lys-33'-linked ubiquitination (By similarity).</text>
</comment>
<comment type="pathway">
    <text>Protein modification; protein ubiquitination.</text>
</comment>
<comment type="subunit">
    <text>Component of the BCR(KLHL20) E3 ubiquitin ligase complex, at least composed of cul3, klhl20 and rbx1.</text>
</comment>
<comment type="subcellular location">
    <subcellularLocation>
        <location evidence="1">Cytoplasm</location>
        <location evidence="1">Perinuclear region</location>
    </subcellularLocation>
    <subcellularLocation>
        <location evidence="1">Nucleus</location>
    </subcellularLocation>
</comment>
<protein>
    <recommendedName>
        <fullName>Kelch-like protein 20</fullName>
    </recommendedName>
</protein>